<name>KMO_PIG</name>
<evidence type="ECO:0000250" key="1">
    <source>
        <dbReference type="UniProtKB" id="O15229"/>
    </source>
</evidence>
<evidence type="ECO:0000250" key="2">
    <source>
        <dbReference type="UniProtKB" id="Q84HF5"/>
    </source>
</evidence>
<evidence type="ECO:0000255" key="3">
    <source>
        <dbReference type="HAMAP-Rule" id="MF_03018"/>
    </source>
</evidence>
<evidence type="ECO:0000305" key="4"/>
<dbReference type="EC" id="1.14.13.9" evidence="3"/>
<dbReference type="EMBL" id="AF163971">
    <property type="protein sequence ID" value="AAF80481.1"/>
    <property type="status" value="ALT_INIT"/>
    <property type="molecule type" value="mRNA"/>
</dbReference>
<dbReference type="RefSeq" id="NP_999241.1">
    <property type="nucleotide sequence ID" value="NM_214076.1"/>
</dbReference>
<dbReference type="SMR" id="Q9MZS9"/>
<dbReference type="FunCoup" id="Q9MZS9">
    <property type="interactions" value="135"/>
</dbReference>
<dbReference type="STRING" id="9823.ENSSSCP00000068455"/>
<dbReference type="PaxDb" id="9823-ENSSSCP00000021083"/>
<dbReference type="Ensembl" id="ENSSSCT00000032127.4">
    <property type="protein sequence ID" value="ENSSSCP00000021083.3"/>
    <property type="gene ID" value="ENSSSCG00000025686.5"/>
</dbReference>
<dbReference type="GeneID" id="397148"/>
<dbReference type="KEGG" id="ssc:397148"/>
<dbReference type="CTD" id="8564"/>
<dbReference type="eggNOG" id="KOG2614">
    <property type="taxonomic scope" value="Eukaryota"/>
</dbReference>
<dbReference type="GeneTree" id="ENSGT00390000000747"/>
<dbReference type="InParanoid" id="Q9MZS9"/>
<dbReference type="OrthoDB" id="10053569at2759"/>
<dbReference type="BRENDA" id="1.14.13.9">
    <property type="organism ID" value="6170"/>
</dbReference>
<dbReference type="UniPathway" id="UPA00253">
    <property type="reaction ID" value="UER00328"/>
</dbReference>
<dbReference type="Proteomes" id="UP000008227">
    <property type="component" value="Unplaced"/>
</dbReference>
<dbReference type="Proteomes" id="UP000314985">
    <property type="component" value="Unplaced"/>
</dbReference>
<dbReference type="Proteomes" id="UP000694570">
    <property type="component" value="Unplaced"/>
</dbReference>
<dbReference type="Proteomes" id="UP000694571">
    <property type="component" value="Unplaced"/>
</dbReference>
<dbReference type="Proteomes" id="UP000694720">
    <property type="component" value="Unplaced"/>
</dbReference>
<dbReference type="Proteomes" id="UP000694722">
    <property type="component" value="Unplaced"/>
</dbReference>
<dbReference type="Proteomes" id="UP000694723">
    <property type="component" value="Unplaced"/>
</dbReference>
<dbReference type="Proteomes" id="UP000694724">
    <property type="component" value="Unplaced"/>
</dbReference>
<dbReference type="Proteomes" id="UP000694725">
    <property type="component" value="Unplaced"/>
</dbReference>
<dbReference type="Proteomes" id="UP000694726">
    <property type="component" value="Unplaced"/>
</dbReference>
<dbReference type="Proteomes" id="UP000694727">
    <property type="component" value="Unplaced"/>
</dbReference>
<dbReference type="Proteomes" id="UP000694728">
    <property type="component" value="Unplaced"/>
</dbReference>
<dbReference type="GO" id="GO:0005741">
    <property type="term" value="C:mitochondrial outer membrane"/>
    <property type="evidence" value="ECO:0000250"/>
    <property type="project" value="UniProtKB"/>
</dbReference>
<dbReference type="GO" id="GO:0071949">
    <property type="term" value="F:FAD binding"/>
    <property type="evidence" value="ECO:0000250"/>
    <property type="project" value="UniProtKB"/>
</dbReference>
<dbReference type="GO" id="GO:0004502">
    <property type="term" value="F:kynurenine 3-monooxygenase activity"/>
    <property type="evidence" value="ECO:0000250"/>
    <property type="project" value="UniProtKB"/>
</dbReference>
<dbReference type="GO" id="GO:0016174">
    <property type="term" value="F:NAD(P)H oxidase H2O2-forming activity"/>
    <property type="evidence" value="ECO:0000250"/>
    <property type="project" value="UniProtKB"/>
</dbReference>
<dbReference type="GO" id="GO:0034354">
    <property type="term" value="P:'de novo' NAD biosynthetic process from L-tryptophan"/>
    <property type="evidence" value="ECO:0007669"/>
    <property type="project" value="UniProtKB-UniRule"/>
</dbReference>
<dbReference type="GO" id="GO:0043420">
    <property type="term" value="P:anthranilate metabolic process"/>
    <property type="evidence" value="ECO:0007669"/>
    <property type="project" value="UniProtKB-UniRule"/>
</dbReference>
<dbReference type="GO" id="GO:0070189">
    <property type="term" value="P:kynurenine metabolic process"/>
    <property type="evidence" value="ECO:0000318"/>
    <property type="project" value="GO_Central"/>
</dbReference>
<dbReference type="GO" id="GO:0006569">
    <property type="term" value="P:L-tryptophan catabolic process"/>
    <property type="evidence" value="ECO:0007669"/>
    <property type="project" value="UniProtKB-UniRule"/>
</dbReference>
<dbReference type="GO" id="GO:0019674">
    <property type="term" value="P:NAD metabolic process"/>
    <property type="evidence" value="ECO:0000250"/>
    <property type="project" value="UniProtKB"/>
</dbReference>
<dbReference type="GO" id="GO:0019805">
    <property type="term" value="P:quinolinate biosynthetic process"/>
    <property type="evidence" value="ECO:0007669"/>
    <property type="project" value="UniProtKB-UniRule"/>
</dbReference>
<dbReference type="GO" id="GO:0009651">
    <property type="term" value="P:response to salt stress"/>
    <property type="evidence" value="ECO:0007669"/>
    <property type="project" value="Ensembl"/>
</dbReference>
<dbReference type="FunFam" id="3.50.50.60:FF:000105">
    <property type="entry name" value="Kynurenine 3-monooxygenase"/>
    <property type="match status" value="1"/>
</dbReference>
<dbReference type="Gene3D" id="3.50.50.60">
    <property type="entry name" value="FAD/NAD(P)-binding domain"/>
    <property type="match status" value="1"/>
</dbReference>
<dbReference type="HAMAP" id="MF_01971">
    <property type="entry name" value="Kynurenine_monooxygenase"/>
    <property type="match status" value="1"/>
</dbReference>
<dbReference type="InterPro" id="IPR002938">
    <property type="entry name" value="FAD-bd"/>
</dbReference>
<dbReference type="InterPro" id="IPR036188">
    <property type="entry name" value="FAD/NAD-bd_sf"/>
</dbReference>
<dbReference type="InterPro" id="IPR027545">
    <property type="entry name" value="Kynurenine_monooxygenase"/>
</dbReference>
<dbReference type="PANTHER" id="PTHR46028">
    <property type="entry name" value="KYNURENINE 3-MONOOXYGENASE"/>
    <property type="match status" value="1"/>
</dbReference>
<dbReference type="PANTHER" id="PTHR46028:SF2">
    <property type="entry name" value="KYNURENINE 3-MONOOXYGENASE"/>
    <property type="match status" value="1"/>
</dbReference>
<dbReference type="Pfam" id="PF01494">
    <property type="entry name" value="FAD_binding_3"/>
    <property type="match status" value="1"/>
</dbReference>
<dbReference type="PRINTS" id="PR00420">
    <property type="entry name" value="RNGMNOXGNASE"/>
</dbReference>
<dbReference type="SUPFAM" id="SSF51905">
    <property type="entry name" value="FAD/NAD(P)-binding domain"/>
    <property type="match status" value="1"/>
</dbReference>
<feature type="chain" id="PRO_0000229744" description="Kynurenine 3-monooxygenase">
    <location>
        <begin position="1"/>
        <end position="471"/>
    </location>
</feature>
<feature type="transmembrane region" description="Helical" evidence="3">
    <location>
        <begin position="385"/>
        <end position="404"/>
    </location>
</feature>
<feature type="transmembrane region" description="Helical" evidence="3">
    <location>
        <begin position="425"/>
        <end position="445"/>
    </location>
</feature>
<feature type="binding site" evidence="1">
    <location>
        <position position="19"/>
    </location>
    <ligand>
        <name>FAD</name>
        <dbReference type="ChEBI" id="CHEBI:57692"/>
    </ligand>
</feature>
<feature type="binding site" evidence="1">
    <location>
        <begin position="37"/>
        <end position="40"/>
    </location>
    <ligand>
        <name>FAD</name>
        <dbReference type="ChEBI" id="CHEBI:57692"/>
    </ligand>
</feature>
<feature type="binding site" evidence="1">
    <location>
        <position position="57"/>
    </location>
    <ligand>
        <name>FAD</name>
        <dbReference type="ChEBI" id="CHEBI:57692"/>
    </ligand>
</feature>
<feature type="binding site" evidence="2">
    <location>
        <position position="85"/>
    </location>
    <ligand>
        <name>L-kynurenine</name>
        <dbReference type="ChEBI" id="CHEBI:57959"/>
    </ligand>
</feature>
<feature type="binding site" evidence="2">
    <location>
        <position position="99"/>
    </location>
    <ligand>
        <name>L-kynurenine</name>
        <dbReference type="ChEBI" id="CHEBI:57959"/>
    </ligand>
</feature>
<feature type="binding site" evidence="1">
    <location>
        <position position="111"/>
    </location>
    <ligand>
        <name>FAD</name>
        <dbReference type="ChEBI" id="CHEBI:57692"/>
    </ligand>
</feature>
<feature type="binding site" evidence="1">
    <location>
        <position position="136"/>
    </location>
    <ligand>
        <name>FAD</name>
        <dbReference type="ChEBI" id="CHEBI:57692"/>
    </ligand>
</feature>
<feature type="binding site" evidence="1">
    <location>
        <position position="172"/>
    </location>
    <ligand>
        <name>FAD</name>
        <dbReference type="ChEBI" id="CHEBI:57692"/>
    </ligand>
</feature>
<feature type="binding site" evidence="1">
    <location>
        <position position="304"/>
    </location>
    <ligand>
        <name>FAD</name>
        <dbReference type="ChEBI" id="CHEBI:57692"/>
    </ligand>
</feature>
<feature type="binding site" evidence="1">
    <location>
        <begin position="317"/>
        <end position="318"/>
    </location>
    <ligand>
        <name>FAD</name>
        <dbReference type="ChEBI" id="CHEBI:57692"/>
    </ligand>
</feature>
<feature type="binding site" evidence="2">
    <location>
        <position position="363"/>
    </location>
    <ligand>
        <name>L-kynurenine</name>
        <dbReference type="ChEBI" id="CHEBI:57959"/>
    </ligand>
</feature>
<feature type="binding site" evidence="2">
    <location>
        <position position="398"/>
    </location>
    <ligand>
        <name>L-kynurenine</name>
        <dbReference type="ChEBI" id="CHEBI:57959"/>
    </ligand>
</feature>
<keyword id="KW-0274">FAD</keyword>
<keyword id="KW-0285">Flavoprotein</keyword>
<keyword id="KW-0472">Membrane</keyword>
<keyword id="KW-0496">Mitochondrion</keyword>
<keyword id="KW-1000">Mitochondrion outer membrane</keyword>
<keyword id="KW-0503">Monooxygenase</keyword>
<keyword id="KW-0521">NADP</keyword>
<keyword id="KW-0560">Oxidoreductase</keyword>
<keyword id="KW-0662">Pyridine nucleotide biosynthesis</keyword>
<keyword id="KW-1185">Reference proteome</keyword>
<keyword id="KW-0812">Transmembrane</keyword>
<keyword id="KW-1133">Transmembrane helix</keyword>
<sequence length="471" mass="53998">MDSSDIQRTSIAVIGGGLVGSLNACFLAKRNFQVDVYESREDIRMAEFARGRSINLALSYRGRQALKAIGLEDQIVSQGIPMRARMIHSLSGKKSAIPYGTKSQYILSISRENLNKDLLTAVEKYPNAKVHFGHQLLKCRPETGVITLLGPDKVPKDIACDLILGCDGAYSTVRTHLVKKPRFDYSQQYIPHGYMELTIPPQNGDFAMEPNYLHIWPRDTFMMIALPNMNKSFTCTLFMPFEEFEKLLTSRDVLDFFQKYFPDSLHLIGKEALAQDFFRLPAQPMISVKCSSFHFNSHCVLMGDAAHALVPFFGQGMNAGFEDCLVFDELMDKFNNDFSMCLPEFSKFRIPDDHAISDLSMYNYIEMRSHVNSRWFIFQKNIERCLHTLMPSTFIPLYTMVTFSRIRYHEAMLRWQWQKKVINTALFFFGTLVALSTTYLLTGPTFRSSLGCLRRSWNSVTYFQNIGRISL</sequence>
<gene>
    <name evidence="3" type="primary">KMO</name>
</gene>
<comment type="function">
    <text evidence="3">Catalyzes the hydroxylation of L-kynurenine (L-Kyn) to form 3-hydroxy-L-kynurenine (L-3OHKyn). Required for synthesis of quinolinic acid, a neurotoxic NMDA receptor antagonist and potential endogenous inhibitor of NMDA receptor signaling in axonal targeting, synaptogenesis and apoptosis during brain development. Quinolinic acid may also affect NMDA receptor signaling in pancreatic beta cells, osteoblasts, myocardial cells, and the gastrointestinal tract.</text>
</comment>
<comment type="catalytic activity">
    <reaction evidence="3">
        <text>L-kynurenine + NADPH + O2 + H(+) = 3-hydroxy-L-kynurenine + NADP(+) + H2O</text>
        <dbReference type="Rhea" id="RHEA:20545"/>
        <dbReference type="ChEBI" id="CHEBI:15377"/>
        <dbReference type="ChEBI" id="CHEBI:15378"/>
        <dbReference type="ChEBI" id="CHEBI:15379"/>
        <dbReference type="ChEBI" id="CHEBI:57783"/>
        <dbReference type="ChEBI" id="CHEBI:57959"/>
        <dbReference type="ChEBI" id="CHEBI:58125"/>
        <dbReference type="ChEBI" id="CHEBI:58349"/>
        <dbReference type="EC" id="1.14.13.9"/>
    </reaction>
</comment>
<comment type="cofactor">
    <cofactor evidence="3">
        <name>FAD</name>
        <dbReference type="ChEBI" id="CHEBI:57692"/>
    </cofactor>
</comment>
<comment type="pathway">
    <text evidence="3">Cofactor biosynthesis; NAD(+) biosynthesis; quinolinate from L-kynurenine: step 1/3.</text>
</comment>
<comment type="subcellular location">
    <subcellularLocation>
        <location evidence="3">Mitochondrion outer membrane</location>
        <topology evidence="3">Multi-pass membrane protein</topology>
    </subcellularLocation>
</comment>
<comment type="domain">
    <text evidence="1">Transmembrane domains are required for enzymatic activity.</text>
</comment>
<comment type="similarity">
    <text evidence="3">Belongs to the aromatic-ring hydroxylase family. KMO subfamily.</text>
</comment>
<comment type="sequence caution" evidence="4">
    <conflict type="erroneous initiation">
        <sequence resource="EMBL-CDS" id="AAF80481"/>
    </conflict>
    <text>Extended N-terminus.</text>
</comment>
<accession>Q9MZS9</accession>
<proteinExistence type="evidence at transcript level"/>
<organism>
    <name type="scientific">Sus scrofa</name>
    <name type="common">Pig</name>
    <dbReference type="NCBI Taxonomy" id="9823"/>
    <lineage>
        <taxon>Eukaryota</taxon>
        <taxon>Metazoa</taxon>
        <taxon>Chordata</taxon>
        <taxon>Craniata</taxon>
        <taxon>Vertebrata</taxon>
        <taxon>Euteleostomi</taxon>
        <taxon>Mammalia</taxon>
        <taxon>Eutheria</taxon>
        <taxon>Laurasiatheria</taxon>
        <taxon>Artiodactyla</taxon>
        <taxon>Suina</taxon>
        <taxon>Suidae</taxon>
        <taxon>Sus</taxon>
    </lineage>
</organism>
<protein>
    <recommendedName>
        <fullName evidence="3">Kynurenine 3-monooxygenase</fullName>
        <ecNumber evidence="3">1.14.13.9</ecNumber>
    </recommendedName>
    <alternativeName>
        <fullName>Fpk</fullName>
    </alternativeName>
    <alternativeName>
        <fullName evidence="3">Kynurenine 3-hydroxylase</fullName>
    </alternativeName>
</protein>
<reference key="1">
    <citation type="journal article" date="1999" name="Adv. Exp. Med. Biol.">
        <title>Purification of L-kynurenine 3-monooxygenase from mitochondrial outer membrane of pig liver.</title>
        <authorList>
            <person name="Uemura T."/>
            <person name="Hirai K."/>
        </authorList>
    </citation>
    <scope>NUCLEOTIDE SEQUENCE [MRNA]</scope>
    <source>
        <tissue>Liver</tissue>
    </source>
</reference>